<sequence>MRRSLAPSQRGPLRPESRHSFTPPLLKKNKRSCQQELEREQELDRKRQSALRDASNTLELPLPIRFTANSEYERAIAKVLARKFKVPMDNYVPDYGGKRVLGVRRCISRRPLHDPVACNALVLFHPPAYTEHERMGMDPSKVLVHVVVDPLLSNILRPHQREGVRFMYECVEGKRGNFNGCIMADEMGLGKTLQCVTLVWTLLRQGPECKPTINKAIVVSPSSLVKNWEKEFTKWLQGRLLCLPMEGGTKENTIRALEQFSMTSSRLGTPVLLISYETFRIYAEILCKYEVGMVICDEGHRLKNSDNLTYQALMGLKTKRRVLLSGTPIQNDLTEYYSLVNFVNPEMLGTAAVFKRNFESAILRGQNTDSTDAERQRAIAKTQELIGLVDQCIIRRTNQILTKYLPVKFEMVICAKLTSIQLELYTNFLKSDQVRRSLADCKEKASLTALADITTLKKICSHPNLIYEKITARDKGFENSQNVLPSNYNAKDLNPELSGKFMLLDFMLAAIRADGNDKVVLISNYTQTLDLFEQLARKRKYGFVRLDGTMSIKKRSKVVDRFNDPESDSFLFMLSSKAGGCGLNLIGANRLFMFDPDWNPANDEQAMARVWRDGQKKPCYIYRLVASGSIEEKILQRQTHKKSLSSTIIDNNESAEKHFTRDDLKDLFTFDADILSDTHDKLKCKRCVQNIQMKPPPEDTDCTSHLSQWYHCSNNRGLPDNILAQAWMDCKCVSFVFHHRSQAQEIVASAEEAASEQPEEKPDRRKRPSTPLSDDSADEDFLGF</sequence>
<gene>
    <name evidence="2" type="primary">okr</name>
    <name type="ORF">GG24469</name>
</gene>
<reference evidence="7" key="1">
    <citation type="journal article" date="2007" name="Nature">
        <title>Evolution of genes and genomes on the Drosophila phylogeny.</title>
        <authorList>
            <consortium name="Drosophila 12 genomes consortium"/>
        </authorList>
    </citation>
    <scope>NUCLEOTIDE SEQUENCE [LARGE SCALE GENOMIC DNA]</scope>
    <source>
        <strain evidence="7">Tucson 14021-0224.01</strain>
    </source>
</reference>
<name>RAD54_DROER</name>
<protein>
    <recommendedName>
        <fullName evidence="2">DNA repair and recombination protein RAD54-like</fullName>
        <ecNumber>3.6.4.-</ecNumber>
    </recommendedName>
    <alternativeName>
        <fullName evidence="2">Protein okra</fullName>
    </alternativeName>
</protein>
<dbReference type="EC" id="3.6.4.-"/>
<dbReference type="EMBL" id="CH954177">
    <property type="protein sequence ID" value="EDV57561.1"/>
    <property type="molecule type" value="Genomic_DNA"/>
</dbReference>
<dbReference type="RefSeq" id="XP_001968502.1">
    <property type="nucleotide sequence ID" value="XM_001968466.2"/>
</dbReference>
<dbReference type="SMR" id="B3NAN8"/>
<dbReference type="EnsemblMetazoa" id="FBtr0144523">
    <property type="protein sequence ID" value="FBpp0143015"/>
    <property type="gene ID" value="FBgn0116601"/>
</dbReference>
<dbReference type="EnsemblMetazoa" id="XM_001968466.3">
    <property type="protein sequence ID" value="XP_001968502.2"/>
    <property type="gene ID" value="LOC6543248"/>
</dbReference>
<dbReference type="GeneID" id="6543248"/>
<dbReference type="KEGG" id="der:6543248"/>
<dbReference type="CTD" id="33507"/>
<dbReference type="eggNOG" id="KOG0390">
    <property type="taxonomic scope" value="Eukaryota"/>
</dbReference>
<dbReference type="HOGENOM" id="CLU_000315_10_2_1"/>
<dbReference type="OMA" id="YTEHERM"/>
<dbReference type="OrthoDB" id="413460at2759"/>
<dbReference type="PhylomeDB" id="B3NAN8"/>
<dbReference type="ChiTaRS" id="okr">
    <property type="organism name" value="fly"/>
</dbReference>
<dbReference type="Proteomes" id="UP000008711">
    <property type="component" value="Unassembled WGS sequence"/>
</dbReference>
<dbReference type="GO" id="GO:0005634">
    <property type="term" value="C:nucleus"/>
    <property type="evidence" value="ECO:0000250"/>
    <property type="project" value="UniProtKB"/>
</dbReference>
<dbReference type="GO" id="GO:0005524">
    <property type="term" value="F:ATP binding"/>
    <property type="evidence" value="ECO:0007669"/>
    <property type="project" value="UniProtKB-KW"/>
</dbReference>
<dbReference type="GO" id="GO:0016887">
    <property type="term" value="F:ATP hydrolysis activity"/>
    <property type="evidence" value="ECO:0007669"/>
    <property type="project" value="EnsemblMetazoa"/>
</dbReference>
<dbReference type="GO" id="GO:0140658">
    <property type="term" value="F:ATP-dependent chromatin remodeler activity"/>
    <property type="evidence" value="ECO:0007669"/>
    <property type="project" value="EnsemblMetazoa"/>
</dbReference>
<dbReference type="GO" id="GO:0003677">
    <property type="term" value="F:DNA binding"/>
    <property type="evidence" value="ECO:0007669"/>
    <property type="project" value="UniProtKB-KW"/>
</dbReference>
<dbReference type="GO" id="GO:0015616">
    <property type="term" value="F:DNA translocase activity"/>
    <property type="evidence" value="ECO:0007669"/>
    <property type="project" value="TreeGrafter"/>
</dbReference>
<dbReference type="GO" id="GO:0004386">
    <property type="term" value="F:helicase activity"/>
    <property type="evidence" value="ECO:0007669"/>
    <property type="project" value="UniProtKB-KW"/>
</dbReference>
<dbReference type="GO" id="GO:0051301">
    <property type="term" value="P:cell division"/>
    <property type="evidence" value="ECO:0007669"/>
    <property type="project" value="UniProtKB-KW"/>
</dbReference>
<dbReference type="GO" id="GO:0006338">
    <property type="term" value="P:chromatin remodeling"/>
    <property type="evidence" value="ECO:0000250"/>
    <property type="project" value="UniProtKB"/>
</dbReference>
<dbReference type="GO" id="GO:0043150">
    <property type="term" value="P:DNA synthesis involved in double-strand break repair via homologous recombination"/>
    <property type="evidence" value="ECO:0000250"/>
    <property type="project" value="UniProtKB"/>
</dbReference>
<dbReference type="GO" id="GO:0000724">
    <property type="term" value="P:double-strand break repair via homologous recombination"/>
    <property type="evidence" value="ECO:0000250"/>
    <property type="project" value="UniProtKB"/>
</dbReference>
<dbReference type="GO" id="GO:0045003">
    <property type="term" value="P:double-strand break repair via synthesis-dependent strand annealing"/>
    <property type="evidence" value="ECO:0007669"/>
    <property type="project" value="EnsemblMetazoa"/>
</dbReference>
<dbReference type="GO" id="GO:0000711">
    <property type="term" value="P:meiotic DNA repair synthesis"/>
    <property type="evidence" value="ECO:0000250"/>
    <property type="project" value="UniProtKB"/>
</dbReference>
<dbReference type="GO" id="GO:0030716">
    <property type="term" value="P:oocyte fate determination"/>
    <property type="evidence" value="ECO:0007669"/>
    <property type="project" value="EnsemblMetazoa"/>
</dbReference>
<dbReference type="GO" id="GO:0048477">
    <property type="term" value="P:oogenesis"/>
    <property type="evidence" value="ECO:0007669"/>
    <property type="project" value="EnsemblMetazoa"/>
</dbReference>
<dbReference type="GO" id="GO:0007131">
    <property type="term" value="P:reciprocal meiotic recombination"/>
    <property type="evidence" value="ECO:0007669"/>
    <property type="project" value="EnsemblMetazoa"/>
</dbReference>
<dbReference type="GO" id="GO:0010212">
    <property type="term" value="P:response to ionizing radiation"/>
    <property type="evidence" value="ECO:0000250"/>
    <property type="project" value="UniProtKB"/>
</dbReference>
<dbReference type="CDD" id="cd18067">
    <property type="entry name" value="DEXHc_RAD54A"/>
    <property type="match status" value="1"/>
</dbReference>
<dbReference type="CDD" id="cd18793">
    <property type="entry name" value="SF2_C_SNF"/>
    <property type="match status" value="1"/>
</dbReference>
<dbReference type="FunFam" id="3.40.50.10810:FF:000010">
    <property type="entry name" value="DNA repair and recombination protein RAD54-like"/>
    <property type="match status" value="1"/>
</dbReference>
<dbReference type="FunFam" id="3.40.50.300:FF:000332">
    <property type="entry name" value="DNA repair and recombination protein RAD54-like"/>
    <property type="match status" value="1"/>
</dbReference>
<dbReference type="Gene3D" id="3.40.50.300">
    <property type="entry name" value="P-loop containing nucleotide triphosphate hydrolases"/>
    <property type="match status" value="1"/>
</dbReference>
<dbReference type="Gene3D" id="1.20.120.850">
    <property type="entry name" value="SWI2/SNF2 ATPases, N-terminal domain"/>
    <property type="match status" value="1"/>
</dbReference>
<dbReference type="Gene3D" id="3.40.50.10810">
    <property type="entry name" value="Tandem AAA-ATPase domain"/>
    <property type="match status" value="1"/>
</dbReference>
<dbReference type="InterPro" id="IPR014001">
    <property type="entry name" value="Helicase_ATP-bd"/>
</dbReference>
<dbReference type="InterPro" id="IPR001650">
    <property type="entry name" value="Helicase_C-like"/>
</dbReference>
<dbReference type="InterPro" id="IPR027417">
    <property type="entry name" value="P-loop_NTPase"/>
</dbReference>
<dbReference type="InterPro" id="IPR038718">
    <property type="entry name" value="SNF2-like_sf"/>
</dbReference>
<dbReference type="InterPro" id="IPR049730">
    <property type="entry name" value="SNF2/RAD54-like_C"/>
</dbReference>
<dbReference type="InterPro" id="IPR000330">
    <property type="entry name" value="SNF2_N"/>
</dbReference>
<dbReference type="InterPro" id="IPR050496">
    <property type="entry name" value="SNF2_RAD54_helicase_repair"/>
</dbReference>
<dbReference type="PANTHER" id="PTHR45629:SF7">
    <property type="entry name" value="DNA EXCISION REPAIR PROTEIN ERCC-6-RELATED"/>
    <property type="match status" value="1"/>
</dbReference>
<dbReference type="PANTHER" id="PTHR45629">
    <property type="entry name" value="SNF2/RAD54 FAMILY MEMBER"/>
    <property type="match status" value="1"/>
</dbReference>
<dbReference type="Pfam" id="PF00271">
    <property type="entry name" value="Helicase_C"/>
    <property type="match status" value="1"/>
</dbReference>
<dbReference type="Pfam" id="PF00176">
    <property type="entry name" value="SNF2-rel_dom"/>
    <property type="match status" value="1"/>
</dbReference>
<dbReference type="SMART" id="SM00487">
    <property type="entry name" value="DEXDc"/>
    <property type="match status" value="1"/>
</dbReference>
<dbReference type="SMART" id="SM00490">
    <property type="entry name" value="HELICc"/>
    <property type="match status" value="1"/>
</dbReference>
<dbReference type="SUPFAM" id="SSF52540">
    <property type="entry name" value="P-loop containing nucleoside triphosphate hydrolases"/>
    <property type="match status" value="2"/>
</dbReference>
<dbReference type="PROSITE" id="PS51192">
    <property type="entry name" value="HELICASE_ATP_BIND_1"/>
    <property type="match status" value="1"/>
</dbReference>
<dbReference type="PROSITE" id="PS51194">
    <property type="entry name" value="HELICASE_CTER"/>
    <property type="match status" value="1"/>
</dbReference>
<comment type="function">
    <text evidence="2">Involved in mitotic DNA repair and meiotic recombination. Functions in the recombinational DNA repair pathway. Essential for interhomolog gene conversion (GC), but may have a less important role in intersister GC than spn-A/Rad51. In the presence of DNA, spn-A/Rad51 enhances the ATPase activity of okr/Rad54 (By similarity).</text>
</comment>
<comment type="subunit">
    <text evidence="1">Interacts (via N-terminus) with spn-A/Rad51.</text>
</comment>
<comment type="subcellular location">
    <subcellularLocation>
        <location evidence="2">Nucleus</location>
    </subcellularLocation>
</comment>
<comment type="similarity">
    <text evidence="3">Belongs to the SNF2/RAD54 helicase family.</text>
</comment>
<organism>
    <name type="scientific">Drosophila erecta</name>
    <name type="common">Fruit fly</name>
    <dbReference type="NCBI Taxonomy" id="7220"/>
    <lineage>
        <taxon>Eukaryota</taxon>
        <taxon>Metazoa</taxon>
        <taxon>Ecdysozoa</taxon>
        <taxon>Arthropoda</taxon>
        <taxon>Hexapoda</taxon>
        <taxon>Insecta</taxon>
        <taxon>Pterygota</taxon>
        <taxon>Neoptera</taxon>
        <taxon>Endopterygota</taxon>
        <taxon>Diptera</taxon>
        <taxon>Brachycera</taxon>
        <taxon>Muscomorpha</taxon>
        <taxon>Ephydroidea</taxon>
        <taxon>Drosophilidae</taxon>
        <taxon>Drosophila</taxon>
        <taxon>Sophophora</taxon>
    </lineage>
</organism>
<evidence type="ECO:0000250" key="1"/>
<evidence type="ECO:0000250" key="2">
    <source>
        <dbReference type="UniProtKB" id="O76460"/>
    </source>
</evidence>
<evidence type="ECO:0000255" key="3"/>
<evidence type="ECO:0000255" key="4">
    <source>
        <dbReference type="PROSITE-ProRule" id="PRU00541"/>
    </source>
</evidence>
<evidence type="ECO:0000255" key="5">
    <source>
        <dbReference type="PROSITE-ProRule" id="PRU00542"/>
    </source>
</evidence>
<evidence type="ECO:0000256" key="6">
    <source>
        <dbReference type="SAM" id="MobiDB-lite"/>
    </source>
</evidence>
<evidence type="ECO:0000312" key="7">
    <source>
        <dbReference type="EMBL" id="EDV57561.1"/>
    </source>
</evidence>
<accession>B3NAN8</accession>
<keyword id="KW-0067">ATP-binding</keyword>
<keyword id="KW-0131">Cell cycle</keyword>
<keyword id="KW-0132">Cell division</keyword>
<keyword id="KW-0227">DNA damage</keyword>
<keyword id="KW-0234">DNA repair</keyword>
<keyword id="KW-0238">DNA-binding</keyword>
<keyword id="KW-0347">Helicase</keyword>
<keyword id="KW-0378">Hydrolase</keyword>
<keyword id="KW-0469">Meiosis</keyword>
<keyword id="KW-0498">Mitosis</keyword>
<keyword id="KW-0547">Nucleotide-binding</keyword>
<keyword id="KW-0539">Nucleus</keyword>
<keyword id="KW-0597">Phosphoprotein</keyword>
<feature type="chain" id="PRO_0000392520" description="DNA repair and recombination protein RAD54-like">
    <location>
        <begin position="1"/>
        <end position="784"/>
    </location>
</feature>
<feature type="domain" description="Helicase ATP-binding" evidence="4">
    <location>
        <begin position="172"/>
        <end position="346"/>
    </location>
</feature>
<feature type="domain" description="Helicase C-terminal" evidence="5">
    <location>
        <begin position="503"/>
        <end position="660"/>
    </location>
</feature>
<feature type="region of interest" description="Disordered" evidence="6">
    <location>
        <begin position="1"/>
        <end position="50"/>
    </location>
</feature>
<feature type="region of interest" description="Required for chromatin remodeling, strand pairing activities and coupling of ATPase activity" evidence="2">
    <location>
        <begin position="2"/>
        <end position="9"/>
    </location>
</feature>
<feature type="region of interest" description="Disordered" evidence="6">
    <location>
        <begin position="747"/>
        <end position="784"/>
    </location>
</feature>
<feature type="short sequence motif" description="DEGH box" evidence="3">
    <location>
        <begin position="297"/>
        <end position="300"/>
    </location>
</feature>
<feature type="compositionally biased region" description="Basic and acidic residues" evidence="6">
    <location>
        <begin position="36"/>
        <end position="47"/>
    </location>
</feature>
<feature type="compositionally biased region" description="Low complexity" evidence="6">
    <location>
        <begin position="747"/>
        <end position="756"/>
    </location>
</feature>
<feature type="compositionally biased region" description="Acidic residues" evidence="6">
    <location>
        <begin position="775"/>
        <end position="784"/>
    </location>
</feature>
<feature type="binding site" evidence="4">
    <location>
        <begin position="185"/>
        <end position="192"/>
    </location>
    <ligand>
        <name>ATP</name>
        <dbReference type="ChEBI" id="CHEBI:30616"/>
    </ligand>
</feature>
<feature type="modified residue" description="Phosphoserine" evidence="2">
    <location>
        <position position="20"/>
    </location>
</feature>
<feature type="modified residue" description="Phosphothreonine" evidence="2">
    <location>
        <position position="22"/>
    </location>
</feature>
<proteinExistence type="inferred from homology"/>